<accession>Q03QZ3</accession>
<evidence type="ECO:0000255" key="1">
    <source>
        <dbReference type="HAMAP-Rule" id="MF_00386"/>
    </source>
</evidence>
<protein>
    <recommendedName>
        <fullName evidence="1">Putative membrane protein insertion efficiency factor</fullName>
    </recommendedName>
</protein>
<comment type="function">
    <text evidence="1">Could be involved in insertion of integral membrane proteins into the membrane.</text>
</comment>
<comment type="subcellular location">
    <subcellularLocation>
        <location evidence="1">Cell membrane</location>
        <topology evidence="1">Peripheral membrane protein</topology>
        <orientation evidence="1">Cytoplasmic side</orientation>
    </subcellularLocation>
</comment>
<comment type="similarity">
    <text evidence="1">Belongs to the UPF0161 family.</text>
</comment>
<proteinExistence type="inferred from homology"/>
<keyword id="KW-1003">Cell membrane</keyword>
<keyword id="KW-0472">Membrane</keyword>
<keyword id="KW-1185">Reference proteome</keyword>
<name>YIDD_LEVBA</name>
<sequence>MRHILIWFVRGYQRFISPLFPPTCRYYPTCSTYMVQALSKHGALKGSLMGLARILRCQPFVRGGIDPVPDHFTLKRNTAAEAAYRQAMQLDEIERHPHK</sequence>
<gene>
    <name type="ordered locus">LVIS_1274</name>
</gene>
<feature type="chain" id="PRO_1000013093" description="Putative membrane protein insertion efficiency factor">
    <location>
        <begin position="1"/>
        <end position="99"/>
    </location>
</feature>
<reference key="1">
    <citation type="journal article" date="2006" name="Proc. Natl. Acad. Sci. U.S.A.">
        <title>Comparative genomics of the lactic acid bacteria.</title>
        <authorList>
            <person name="Makarova K.S."/>
            <person name="Slesarev A."/>
            <person name="Wolf Y.I."/>
            <person name="Sorokin A."/>
            <person name="Mirkin B."/>
            <person name="Koonin E.V."/>
            <person name="Pavlov A."/>
            <person name="Pavlova N."/>
            <person name="Karamychev V."/>
            <person name="Polouchine N."/>
            <person name="Shakhova V."/>
            <person name="Grigoriev I."/>
            <person name="Lou Y."/>
            <person name="Rohksar D."/>
            <person name="Lucas S."/>
            <person name="Huang K."/>
            <person name="Goodstein D.M."/>
            <person name="Hawkins T."/>
            <person name="Plengvidhya V."/>
            <person name="Welker D."/>
            <person name="Hughes J."/>
            <person name="Goh Y."/>
            <person name="Benson A."/>
            <person name="Baldwin K."/>
            <person name="Lee J.-H."/>
            <person name="Diaz-Muniz I."/>
            <person name="Dosti B."/>
            <person name="Smeianov V."/>
            <person name="Wechter W."/>
            <person name="Barabote R."/>
            <person name="Lorca G."/>
            <person name="Altermann E."/>
            <person name="Barrangou R."/>
            <person name="Ganesan B."/>
            <person name="Xie Y."/>
            <person name="Rawsthorne H."/>
            <person name="Tamir D."/>
            <person name="Parker C."/>
            <person name="Breidt F."/>
            <person name="Broadbent J.R."/>
            <person name="Hutkins R."/>
            <person name="O'Sullivan D."/>
            <person name="Steele J."/>
            <person name="Unlu G."/>
            <person name="Saier M.H. Jr."/>
            <person name="Klaenhammer T."/>
            <person name="Richardson P."/>
            <person name="Kozyavkin S."/>
            <person name="Weimer B.C."/>
            <person name="Mills D.A."/>
        </authorList>
    </citation>
    <scope>NUCLEOTIDE SEQUENCE [LARGE SCALE GENOMIC DNA]</scope>
    <source>
        <strain>ATCC 367 / BCRC 12310 / CIP 105137 / JCM 1170 / LMG 11437 / NCIMB 947 / NCTC 947</strain>
    </source>
</reference>
<dbReference type="EMBL" id="CP000416">
    <property type="protein sequence ID" value="ABJ64379.1"/>
    <property type="molecule type" value="Genomic_DNA"/>
</dbReference>
<dbReference type="STRING" id="387344.LVIS_1274"/>
<dbReference type="KEGG" id="lbr:LVIS_1274"/>
<dbReference type="eggNOG" id="COG0759">
    <property type="taxonomic scope" value="Bacteria"/>
</dbReference>
<dbReference type="HOGENOM" id="CLU_144811_2_2_9"/>
<dbReference type="Proteomes" id="UP000001652">
    <property type="component" value="Chromosome"/>
</dbReference>
<dbReference type="GO" id="GO:0005886">
    <property type="term" value="C:plasma membrane"/>
    <property type="evidence" value="ECO:0007669"/>
    <property type="project" value="UniProtKB-SubCell"/>
</dbReference>
<dbReference type="HAMAP" id="MF_00386">
    <property type="entry name" value="UPF0161_YidD"/>
    <property type="match status" value="1"/>
</dbReference>
<dbReference type="InterPro" id="IPR002696">
    <property type="entry name" value="Membr_insert_effic_factor_YidD"/>
</dbReference>
<dbReference type="NCBIfam" id="TIGR00278">
    <property type="entry name" value="membrane protein insertion efficiency factor YidD"/>
    <property type="match status" value="1"/>
</dbReference>
<dbReference type="PANTHER" id="PTHR33383">
    <property type="entry name" value="MEMBRANE PROTEIN INSERTION EFFICIENCY FACTOR-RELATED"/>
    <property type="match status" value="1"/>
</dbReference>
<dbReference type="PANTHER" id="PTHR33383:SF1">
    <property type="entry name" value="MEMBRANE PROTEIN INSERTION EFFICIENCY FACTOR-RELATED"/>
    <property type="match status" value="1"/>
</dbReference>
<dbReference type="Pfam" id="PF01809">
    <property type="entry name" value="YidD"/>
    <property type="match status" value="1"/>
</dbReference>
<dbReference type="SMART" id="SM01234">
    <property type="entry name" value="Haemolytic"/>
    <property type="match status" value="1"/>
</dbReference>
<organism>
    <name type="scientific">Levilactobacillus brevis (strain ATCC 367 / BCRC 12310 / CIP 105137 / JCM 1170 / LMG 11437 / NCIMB 947 / NCTC 947)</name>
    <name type="common">Lactobacillus brevis</name>
    <dbReference type="NCBI Taxonomy" id="387344"/>
    <lineage>
        <taxon>Bacteria</taxon>
        <taxon>Bacillati</taxon>
        <taxon>Bacillota</taxon>
        <taxon>Bacilli</taxon>
        <taxon>Lactobacillales</taxon>
        <taxon>Lactobacillaceae</taxon>
        <taxon>Levilactobacillus</taxon>
    </lineage>
</organism>